<protein>
    <recommendedName>
        <fullName>S-adenosylmethionine synthase</fullName>
        <shortName>AdoMet synthase</shortName>
        <ecNumber evidence="3">2.5.1.6</ecNumber>
    </recommendedName>
    <alternativeName>
        <fullName>Methionine adenosyltransferase</fullName>
        <shortName>MAT</shortName>
    </alternativeName>
</protein>
<gene>
    <name evidence="6" type="primary">Sams</name>
    <name type="synonym">M(2)21AB</name>
    <name evidence="6" type="synonym">Sam-S</name>
    <name evidence="6" type="ORF">CG2674</name>
</gene>
<feature type="chain" id="PRO_0000174446" description="S-adenosylmethionine synthase">
    <location>
        <begin position="1"/>
        <end position="408"/>
    </location>
</feature>
<feature type="binding site" evidence="2">
    <location>
        <position position="34"/>
    </location>
    <ligand>
        <name>Mg(2+)</name>
        <dbReference type="ChEBI" id="CHEBI:18420"/>
    </ligand>
</feature>
<feature type="binding site" description="in other chain" evidence="3">
    <location>
        <position position="40"/>
    </location>
    <ligand>
        <name>ATP</name>
        <dbReference type="ChEBI" id="CHEBI:30616"/>
        <note>ligand shared between two neighboring subunits</note>
    </ligand>
</feature>
<feature type="binding site" evidence="1">
    <location>
        <position position="68"/>
    </location>
    <ligand>
        <name>K(+)</name>
        <dbReference type="ChEBI" id="CHEBI:29103"/>
    </ligand>
</feature>
<feature type="binding site" description="in other chain" evidence="1">
    <location>
        <position position="81"/>
    </location>
    <ligand>
        <name>L-methionine</name>
        <dbReference type="ChEBI" id="CHEBI:57844"/>
        <note>ligand shared between two neighboring subunits</note>
    </ligand>
</feature>
<feature type="binding site" description="in other chain" evidence="1">
    <location>
        <position position="124"/>
    </location>
    <ligand>
        <name>L-methionine</name>
        <dbReference type="ChEBI" id="CHEBI:57844"/>
        <note>ligand shared between two neighboring subunits</note>
    </ligand>
</feature>
<feature type="binding site" description="in other chain" evidence="3">
    <location>
        <begin position="190"/>
        <end position="192"/>
    </location>
    <ligand>
        <name>ATP</name>
        <dbReference type="ChEBI" id="CHEBI:30616"/>
        <note>ligand shared between two neighboring subunits</note>
    </ligand>
</feature>
<feature type="binding site" description="in other chain" evidence="3">
    <location>
        <begin position="258"/>
        <end position="261"/>
    </location>
    <ligand>
        <name>ATP</name>
        <dbReference type="ChEBI" id="CHEBI:30616"/>
        <note>ligand shared between two neighboring subunits</note>
    </ligand>
</feature>
<feature type="binding site" description="in other chain" evidence="3">
    <location>
        <position position="269"/>
    </location>
    <ligand>
        <name>ATP</name>
        <dbReference type="ChEBI" id="CHEBI:30616"/>
        <note>ligand shared between two neighboring subunits</note>
    </ligand>
</feature>
<feature type="binding site" evidence="1">
    <location>
        <position position="269"/>
    </location>
    <ligand>
        <name>L-methionine</name>
        <dbReference type="ChEBI" id="CHEBI:57844"/>
        <note>ligand shared between two neighboring subunits</note>
    </ligand>
</feature>
<feature type="binding site" description="in other chain" evidence="1">
    <location>
        <begin position="275"/>
        <end position="276"/>
    </location>
    <ligand>
        <name>ATP</name>
        <dbReference type="ChEBI" id="CHEBI:30616"/>
        <note>ligand shared between two neighboring subunits</note>
    </ligand>
</feature>
<feature type="binding site" evidence="1">
    <location>
        <position position="292"/>
    </location>
    <ligand>
        <name>ATP</name>
        <dbReference type="ChEBI" id="CHEBI:30616"/>
        <note>ligand shared between two neighboring subunits</note>
    </ligand>
</feature>
<feature type="binding site" evidence="1">
    <location>
        <position position="296"/>
    </location>
    <ligand>
        <name>ATP</name>
        <dbReference type="ChEBI" id="CHEBI:30616"/>
        <note>ligand shared between two neighboring subunits</note>
    </ligand>
</feature>
<feature type="binding site" evidence="2">
    <location>
        <position position="300"/>
    </location>
    <ligand>
        <name>ATP</name>
        <dbReference type="ChEBI" id="CHEBI:30616"/>
        <note>ligand shared between two neighboring subunits</note>
    </ligand>
</feature>
<feature type="binding site" description="in other chain" evidence="1">
    <location>
        <position position="300"/>
    </location>
    <ligand>
        <name>L-methionine</name>
        <dbReference type="ChEBI" id="CHEBI:57844"/>
        <note>ligand shared between two neighboring subunits</note>
    </ligand>
</feature>
<feature type="splice variant" id="VSP_005961" description="In isoform 4." evidence="5">
    <location>
        <begin position="1"/>
        <end position="27"/>
    </location>
</feature>
<feature type="splice variant" id="VSP_005962" description="In isoform 4." evidence="5">
    <original>TFLFTSESVGEGHP</original>
    <variation>MISAECHSEEYTPN</variation>
    <location>
        <begin position="28"/>
        <end position="41"/>
    </location>
</feature>
<feature type="splice variant" id="VSP_005963" description="In isoform 1, isoform 3 and isoform 4." evidence="5">
    <original>FKTCNVLLALDQQSPEIAAGVHVNRAEEEI</original>
    <variation>WKTLNLLVAIEQQSPNIANGVHINREEEDV</variation>
    <location>
        <begin position="112"/>
        <end position="141"/>
    </location>
</feature>
<feature type="splice variant" id="VSP_005964" description="In isoform 1." evidence="5">
    <original>GIMFGYATDETEECMPLTVVLAHKLNEKIAELRRSDVFWWARPDSKTQVTCEYL</original>
    <variation>VSISKRAMCCWHWTNNRLRSLRECMSTVPRKRSVPEIRVSCLDMPPTKPRNVCP</variation>
    <location>
        <begin position="147"/>
        <end position="200"/>
    </location>
</feature>
<feature type="splice variant" id="VSP_005965" description="In isoform 1." evidence="5">
    <location>
        <begin position="201"/>
        <end position="408"/>
    </location>
</feature>
<feature type="sequence conflict" description="In Ref. 1; CAA54567." evidence="5" ref="1">
    <original>E</original>
    <variation>V</variation>
    <location>
        <position position="34"/>
    </location>
</feature>
<feature type="sequence conflict" description="In Ref. 1; CAA54567." evidence="5" ref="1">
    <original>V</original>
    <variation>I</variation>
    <location>
        <position position="94"/>
    </location>
</feature>
<feature type="sequence conflict" description="In Ref. 1; CAA54567." evidence="5" ref="1">
    <original>G</original>
    <variation>A</variation>
    <location>
        <position position="290"/>
    </location>
</feature>
<feature type="sequence conflict" description="In Ref. 1; CAA54567." evidence="5" ref="1">
    <original>EAKPLEIDN</original>
    <variation>SQASGD</variation>
    <location>
        <begin position="400"/>
        <end position="408"/>
    </location>
</feature>
<dbReference type="EC" id="2.5.1.6" evidence="3"/>
<dbReference type="EMBL" id="X77392">
    <property type="protein sequence ID" value="CAA54567.1"/>
    <property type="molecule type" value="mRNA"/>
</dbReference>
<dbReference type="EMBL" id="AE014134">
    <property type="protein sequence ID" value="AAF51555.1"/>
    <property type="molecule type" value="Genomic_DNA"/>
</dbReference>
<dbReference type="EMBL" id="AE014134">
    <property type="protein sequence ID" value="AAF51556.1"/>
    <property type="molecule type" value="Genomic_DNA"/>
</dbReference>
<dbReference type="EMBL" id="AE014134">
    <property type="protein sequence ID" value="AAF51557.1"/>
    <property type="molecule type" value="Genomic_DNA"/>
</dbReference>
<dbReference type="EMBL" id="AE014134">
    <property type="protein sequence ID" value="AAF51558.1"/>
    <property type="molecule type" value="Genomic_DNA"/>
</dbReference>
<dbReference type="EMBL" id="AE014134">
    <property type="protein sequence ID" value="AAN10505.1"/>
    <property type="molecule type" value="Genomic_DNA"/>
</dbReference>
<dbReference type="EMBL" id="AE014134">
    <property type="protein sequence ID" value="AAN10506.1"/>
    <property type="molecule type" value="Genomic_DNA"/>
</dbReference>
<dbReference type="EMBL" id="AE014134">
    <property type="protein sequence ID" value="AAN10507.1"/>
    <property type="molecule type" value="Genomic_DNA"/>
</dbReference>
<dbReference type="EMBL" id="AE014134">
    <property type="protein sequence ID" value="AAS64636.1"/>
    <property type="molecule type" value="Genomic_DNA"/>
</dbReference>
<dbReference type="EMBL" id="AY051918">
    <property type="protein sequence ID" value="AAK93342.1"/>
    <property type="molecule type" value="mRNA"/>
</dbReference>
<dbReference type="PIR" id="S43258">
    <property type="entry name" value="S41917"/>
</dbReference>
<dbReference type="RefSeq" id="NP_524923.1">
    <molecule id="P40320-3"/>
    <property type="nucleotide sequence ID" value="NM_080184.2"/>
</dbReference>
<dbReference type="RefSeq" id="NP_722593.1">
    <molecule id="P40320-3"/>
    <property type="nucleotide sequence ID" value="NM_164355.3"/>
</dbReference>
<dbReference type="RefSeq" id="NP_722594.1">
    <molecule id="P40320-1"/>
    <property type="nucleotide sequence ID" value="NM_164356.2"/>
</dbReference>
<dbReference type="RefSeq" id="NP_722595.1">
    <molecule id="P40320-1"/>
    <property type="nucleotide sequence ID" value="NM_164357.2"/>
</dbReference>
<dbReference type="RefSeq" id="NP_722596.1">
    <molecule id="P40320-1"/>
    <property type="nucleotide sequence ID" value="NM_164358.2"/>
</dbReference>
<dbReference type="RefSeq" id="NP_722597.1">
    <molecule id="P40320-1"/>
    <property type="nucleotide sequence ID" value="NM_164359.2"/>
</dbReference>
<dbReference type="RefSeq" id="NP_722598.1">
    <molecule id="P40320-1"/>
    <property type="nucleotide sequence ID" value="NM_164360.3"/>
</dbReference>
<dbReference type="RefSeq" id="NP_722599.1">
    <molecule id="P40320-2"/>
    <property type="nucleotide sequence ID" value="NM_164361.2"/>
</dbReference>
<dbReference type="RefSeq" id="NP_722600.1">
    <molecule id="P40320-4"/>
    <property type="nucleotide sequence ID" value="NM_164362.3"/>
</dbReference>
<dbReference type="RefSeq" id="NP_995602.1">
    <molecule id="P40320-1"/>
    <property type="nucleotide sequence ID" value="NM_205880.1"/>
</dbReference>
<dbReference type="SMR" id="P40320"/>
<dbReference type="BioGRID" id="71491">
    <property type="interactions" value="28"/>
</dbReference>
<dbReference type="DIP" id="DIP-18340N"/>
<dbReference type="FunCoup" id="P40320">
    <property type="interactions" value="1156"/>
</dbReference>
<dbReference type="IntAct" id="P40320">
    <property type="interactions" value="13"/>
</dbReference>
<dbReference type="STRING" id="7227.FBpp0088450"/>
<dbReference type="PaxDb" id="7227-FBpp0088926"/>
<dbReference type="DNASU" id="48552"/>
<dbReference type="EnsemblMetazoa" id="FBtr0089428">
    <molecule id="P40320-2"/>
    <property type="protein sequence ID" value="FBpp0088444"/>
    <property type="gene ID" value="FBgn0005278"/>
</dbReference>
<dbReference type="EnsemblMetazoa" id="FBtr0089429">
    <molecule id="P40320-1"/>
    <property type="protein sequence ID" value="FBpp0088445"/>
    <property type="gene ID" value="FBgn0005278"/>
</dbReference>
<dbReference type="EnsemblMetazoa" id="FBtr0089430">
    <molecule id="P40320-1"/>
    <property type="protein sequence ID" value="FBpp0088446"/>
    <property type="gene ID" value="FBgn0005278"/>
</dbReference>
<dbReference type="EnsemblMetazoa" id="FBtr0089431">
    <molecule id="P40320-3"/>
    <property type="protein sequence ID" value="FBpp0088447"/>
    <property type="gene ID" value="FBgn0005278"/>
</dbReference>
<dbReference type="EnsemblMetazoa" id="FBtr0089432">
    <molecule id="P40320-1"/>
    <property type="protein sequence ID" value="FBpp0088448"/>
    <property type="gene ID" value="FBgn0005278"/>
</dbReference>
<dbReference type="EnsemblMetazoa" id="FBtr0089433">
    <molecule id="P40320-1"/>
    <property type="protein sequence ID" value="FBpp0088449"/>
    <property type="gene ID" value="FBgn0005278"/>
</dbReference>
<dbReference type="EnsemblMetazoa" id="FBtr0089434">
    <molecule id="P40320-1"/>
    <property type="protein sequence ID" value="FBpp0088450"/>
    <property type="gene ID" value="FBgn0005278"/>
</dbReference>
<dbReference type="EnsemblMetazoa" id="FBtr0089435">
    <molecule id="P40320-3"/>
    <property type="protein sequence ID" value="FBpp0088451"/>
    <property type="gene ID" value="FBgn0005278"/>
</dbReference>
<dbReference type="EnsemblMetazoa" id="FBtr0089436">
    <molecule id="P40320-4"/>
    <property type="protein sequence ID" value="FBpp0088452"/>
    <property type="gene ID" value="FBgn0005278"/>
</dbReference>
<dbReference type="EnsemblMetazoa" id="FBtr0089437">
    <molecule id="P40320-1"/>
    <property type="protein sequence ID" value="FBpp0088926"/>
    <property type="gene ID" value="FBgn0005278"/>
</dbReference>
<dbReference type="GeneID" id="48552"/>
<dbReference type="KEGG" id="dme:Dmel_CG2674"/>
<dbReference type="AGR" id="FB:FBgn0005278"/>
<dbReference type="CTD" id="48552"/>
<dbReference type="FlyBase" id="FBgn0005278">
    <property type="gene designation" value="Sams"/>
</dbReference>
<dbReference type="VEuPathDB" id="VectorBase:FBgn0005278"/>
<dbReference type="eggNOG" id="KOG1506">
    <property type="taxonomic scope" value="Eukaryota"/>
</dbReference>
<dbReference type="GeneTree" id="ENSGT00950000183185"/>
<dbReference type="HOGENOM" id="CLU_041802_0_1_1"/>
<dbReference type="InParanoid" id="P40320"/>
<dbReference type="OMA" id="ASYMARY"/>
<dbReference type="OrthoDB" id="5852090at2759"/>
<dbReference type="PhylomeDB" id="P40320"/>
<dbReference type="SignaLink" id="P40320"/>
<dbReference type="UniPathway" id="UPA00315">
    <property type="reaction ID" value="UER00080"/>
</dbReference>
<dbReference type="BioGRID-ORCS" id="48552">
    <property type="hits" value="1 hit in 3 CRISPR screens"/>
</dbReference>
<dbReference type="ChiTaRS" id="Sam-S">
    <property type="organism name" value="fly"/>
</dbReference>
<dbReference type="GenomeRNAi" id="48552"/>
<dbReference type="PRO" id="PR:P40320"/>
<dbReference type="Proteomes" id="UP000000803">
    <property type="component" value="Chromosome 2L"/>
</dbReference>
<dbReference type="Bgee" id="FBgn0005278">
    <property type="expression patterns" value="Expressed in nurse follicle cell (Drosophila) in ovary and 290 other cell types or tissues"/>
</dbReference>
<dbReference type="ExpressionAtlas" id="P40320">
    <property type="expression patterns" value="baseline and differential"/>
</dbReference>
<dbReference type="GO" id="GO:0005829">
    <property type="term" value="C:cytosol"/>
    <property type="evidence" value="ECO:0000318"/>
    <property type="project" value="GO_Central"/>
</dbReference>
<dbReference type="GO" id="GO:0005524">
    <property type="term" value="F:ATP binding"/>
    <property type="evidence" value="ECO:0007669"/>
    <property type="project" value="UniProtKB-KW"/>
</dbReference>
<dbReference type="GO" id="GO:0046872">
    <property type="term" value="F:metal ion binding"/>
    <property type="evidence" value="ECO:0007669"/>
    <property type="project" value="UniProtKB-KW"/>
</dbReference>
<dbReference type="GO" id="GO:0004478">
    <property type="term" value="F:methionine adenosyltransferase activity"/>
    <property type="evidence" value="ECO:0000250"/>
    <property type="project" value="FlyBase"/>
</dbReference>
<dbReference type="GO" id="GO:0008340">
    <property type="term" value="P:determination of adult lifespan"/>
    <property type="evidence" value="ECO:0000315"/>
    <property type="project" value="FlyBase"/>
</dbReference>
<dbReference type="GO" id="GO:0006730">
    <property type="term" value="P:one-carbon metabolic process"/>
    <property type="evidence" value="ECO:0007669"/>
    <property type="project" value="UniProtKB-KW"/>
</dbReference>
<dbReference type="GO" id="GO:0006556">
    <property type="term" value="P:S-adenosylmethionine biosynthetic process"/>
    <property type="evidence" value="ECO:0000315"/>
    <property type="project" value="FlyBase"/>
</dbReference>
<dbReference type="CDD" id="cd18079">
    <property type="entry name" value="S-AdoMet_synt"/>
    <property type="match status" value="1"/>
</dbReference>
<dbReference type="FunFam" id="3.30.300.10:FF:000001">
    <property type="entry name" value="S-adenosylmethionine synthase"/>
    <property type="match status" value="1"/>
</dbReference>
<dbReference type="FunFam" id="3.30.300.10:FF:000003">
    <property type="entry name" value="S-adenosylmethionine synthase"/>
    <property type="match status" value="1"/>
</dbReference>
<dbReference type="FunFam" id="3.30.300.10:FF:000004">
    <property type="entry name" value="S-adenosylmethionine synthase"/>
    <property type="match status" value="1"/>
</dbReference>
<dbReference type="Gene3D" id="3.30.300.10">
    <property type="match status" value="3"/>
</dbReference>
<dbReference type="HAMAP" id="MF_00086">
    <property type="entry name" value="S_AdoMet_synth1"/>
    <property type="match status" value="1"/>
</dbReference>
<dbReference type="InterPro" id="IPR022631">
    <property type="entry name" value="ADOMET_SYNTHASE_CS"/>
</dbReference>
<dbReference type="InterPro" id="IPR022630">
    <property type="entry name" value="S-AdoMet_synt_C"/>
</dbReference>
<dbReference type="InterPro" id="IPR022629">
    <property type="entry name" value="S-AdoMet_synt_central"/>
</dbReference>
<dbReference type="InterPro" id="IPR022628">
    <property type="entry name" value="S-AdoMet_synt_N"/>
</dbReference>
<dbReference type="InterPro" id="IPR002133">
    <property type="entry name" value="S-AdoMet_synthetase"/>
</dbReference>
<dbReference type="InterPro" id="IPR022636">
    <property type="entry name" value="S-AdoMet_synthetase_sfam"/>
</dbReference>
<dbReference type="NCBIfam" id="TIGR01034">
    <property type="entry name" value="metK"/>
    <property type="match status" value="1"/>
</dbReference>
<dbReference type="PANTHER" id="PTHR11964">
    <property type="entry name" value="S-ADENOSYLMETHIONINE SYNTHETASE"/>
    <property type="match status" value="1"/>
</dbReference>
<dbReference type="Pfam" id="PF02773">
    <property type="entry name" value="S-AdoMet_synt_C"/>
    <property type="match status" value="1"/>
</dbReference>
<dbReference type="Pfam" id="PF02772">
    <property type="entry name" value="S-AdoMet_synt_M"/>
    <property type="match status" value="1"/>
</dbReference>
<dbReference type="Pfam" id="PF00438">
    <property type="entry name" value="S-AdoMet_synt_N"/>
    <property type="match status" value="1"/>
</dbReference>
<dbReference type="PIRSF" id="PIRSF000497">
    <property type="entry name" value="MAT"/>
    <property type="match status" value="1"/>
</dbReference>
<dbReference type="SUPFAM" id="SSF55973">
    <property type="entry name" value="S-adenosylmethionine synthetase"/>
    <property type="match status" value="3"/>
</dbReference>
<dbReference type="PROSITE" id="PS00376">
    <property type="entry name" value="ADOMET_SYNTHASE_1"/>
    <property type="match status" value="1"/>
</dbReference>
<dbReference type="PROSITE" id="PS00377">
    <property type="entry name" value="ADOMET_SYNTHASE_2"/>
    <property type="match status" value="1"/>
</dbReference>
<proteinExistence type="evidence at transcript level"/>
<organism>
    <name type="scientific">Drosophila melanogaster</name>
    <name type="common">Fruit fly</name>
    <dbReference type="NCBI Taxonomy" id="7227"/>
    <lineage>
        <taxon>Eukaryota</taxon>
        <taxon>Metazoa</taxon>
        <taxon>Ecdysozoa</taxon>
        <taxon>Arthropoda</taxon>
        <taxon>Hexapoda</taxon>
        <taxon>Insecta</taxon>
        <taxon>Pterygota</taxon>
        <taxon>Neoptera</taxon>
        <taxon>Endopterygota</taxon>
        <taxon>Diptera</taxon>
        <taxon>Brachycera</taxon>
        <taxon>Muscomorpha</taxon>
        <taxon>Ephydroidea</taxon>
        <taxon>Drosophilidae</taxon>
        <taxon>Drosophila</taxon>
        <taxon>Sophophora</taxon>
    </lineage>
</organism>
<sequence length="408" mass="44697">MPQKTNGHSANGCNGSNGNSYDMEDGATFLFTSESVGEGHPDKMCDQISDAILDAHLKQDPNAKVACETVAKTGMILLCGEITSKAVVDYQKVVRETVQHIGYDDSSKGFDFKTCNVLLALDQQSPEIAAGVHVNRAEEEIGAGDQGIMFGYATDETEECMPLTVVLAHKLNEKIAELRRSDVFWWARPDSKTQVTCEYLFNQGSAVPKRVHTIVVSMQHSEKISLETLRSEVMEKVVKVVIPAKYIDANTIVHINPCGLFVIGGPMGDAGLTGRKIIVDTYGGWGAHGGGAFSGKDFTKVDRSAAYAARWVAKSLVKAGLCKRCLVQVSYAIGLAEPLSITVFDYGTSHKSQKELLDIIRRNFDLRPGKIVKDLNLRQPIYQRTSTYGHFGRAGFSWEEAKPLEIDN</sequence>
<accession>P40320</accession>
<accession>Q0E8V3</accession>
<accession>Q9VPJ2</accession>
<accession>Q9VPJ3</accession>
<accession>Q9VPJ4</accession>
<accession>Q9VPJ5</accession>
<evidence type="ECO:0000250" key="1">
    <source>
        <dbReference type="UniProtKB" id="P0A817"/>
    </source>
</evidence>
<evidence type="ECO:0000250" key="2">
    <source>
        <dbReference type="UniProtKB" id="P13444"/>
    </source>
</evidence>
<evidence type="ECO:0000250" key="3">
    <source>
        <dbReference type="UniProtKB" id="Q00266"/>
    </source>
</evidence>
<evidence type="ECO:0000269" key="4">
    <source>
    </source>
</evidence>
<evidence type="ECO:0000305" key="5"/>
<evidence type="ECO:0000312" key="6">
    <source>
        <dbReference type="FlyBase" id="FBgn0005278"/>
    </source>
</evidence>
<keyword id="KW-0025">Alternative splicing</keyword>
<keyword id="KW-0067">ATP-binding</keyword>
<keyword id="KW-0460">Magnesium</keyword>
<keyword id="KW-0479">Metal-binding</keyword>
<keyword id="KW-0547">Nucleotide-binding</keyword>
<keyword id="KW-0554">One-carbon metabolism</keyword>
<keyword id="KW-0630">Potassium</keyword>
<keyword id="KW-1185">Reference proteome</keyword>
<keyword id="KW-0808">Transferase</keyword>
<comment type="function">
    <text evidence="3">Catalyzes the formation of S-adenosylmethionine from methionine and ATP. The reaction comprises two steps that are both catalyzed by the same enzyme: formation of S-adenosylmethionine (AdoMet) and triphosphate, and subsequent hydrolysis of the triphosphate.</text>
</comment>
<comment type="catalytic activity">
    <reaction evidence="3">
        <text>L-methionine + ATP + H2O = S-adenosyl-L-methionine + phosphate + diphosphate</text>
        <dbReference type="Rhea" id="RHEA:21080"/>
        <dbReference type="ChEBI" id="CHEBI:15377"/>
        <dbReference type="ChEBI" id="CHEBI:30616"/>
        <dbReference type="ChEBI" id="CHEBI:33019"/>
        <dbReference type="ChEBI" id="CHEBI:43474"/>
        <dbReference type="ChEBI" id="CHEBI:57844"/>
        <dbReference type="ChEBI" id="CHEBI:59789"/>
        <dbReference type="EC" id="2.5.1.6"/>
    </reaction>
</comment>
<comment type="cofactor">
    <cofactor evidence="2">
        <name>Mg(2+)</name>
        <dbReference type="ChEBI" id="CHEBI:18420"/>
    </cofactor>
    <text evidence="2">Binds 2 magnesium ions per subunit. The magnesium ions interact primarily with the substrate.</text>
</comment>
<comment type="cofactor">
    <cofactor evidence="2">
        <name>K(+)</name>
        <dbReference type="ChEBI" id="CHEBI:29103"/>
    </cofactor>
    <text evidence="2">Binds 1 potassium ion per subunit. The potassium ion interacts primarily with the substrate.</text>
</comment>
<comment type="pathway">
    <text evidence="3">Amino-acid biosynthesis; S-adenosyl-L-methionine biosynthesis; S-adenosyl-L-methionine from L-methionine: step 1/1.</text>
</comment>
<comment type="alternative products">
    <event type="alternative splicing"/>
    <isoform>
        <id>P40320-1</id>
        <name>2</name>
        <name>A</name>
        <name>D</name>
        <sequence type="displayed"/>
    </isoform>
    <isoform>
        <id>P40320-2</id>
        <name>1</name>
        <name>B</name>
        <sequence type="described" ref="VSP_005963 VSP_005964 VSP_005965"/>
    </isoform>
    <isoform>
        <id>P40320-3</id>
        <name>3</name>
        <name>C</name>
        <name>J</name>
        <sequence type="described" ref="VSP_005963"/>
    </isoform>
    <isoform>
        <id>P40320-4</id>
        <name>4</name>
        <name>G</name>
        <sequence type="described" ref="VSP_005961 VSP_005962 VSP_005963"/>
    </isoform>
</comment>
<comment type="developmental stage">
    <text evidence="4">Expressed both maternally and zygotically. Expressed throughout development with highest levels at adult stages.</text>
</comment>
<comment type="similarity">
    <text evidence="5">Belongs to the AdoMet synthase family.</text>
</comment>
<name>METK_DROME</name>
<reference key="1">
    <citation type="journal article" date="1994" name="FEBS Lett.">
        <title>Molecular cloning of the S-adenosylmethionine synthetase gene in Drosophila melanogaster.</title>
        <authorList>
            <person name="Larsson J."/>
            <person name="Rasmuson-Lestander A."/>
        </authorList>
    </citation>
    <scope>NUCLEOTIDE SEQUENCE [MRNA] (ISOFORM 2)</scope>
    <scope>DEVELOPMENTAL STAGE</scope>
    <source>
        <strain>Canton-S</strain>
        <tissue>Pupae</tissue>
    </source>
</reference>
<reference key="2">
    <citation type="journal article" date="2000" name="Science">
        <title>The genome sequence of Drosophila melanogaster.</title>
        <authorList>
            <person name="Adams M.D."/>
            <person name="Celniker S.E."/>
            <person name="Holt R.A."/>
            <person name="Evans C.A."/>
            <person name="Gocayne J.D."/>
            <person name="Amanatides P.G."/>
            <person name="Scherer S.E."/>
            <person name="Li P.W."/>
            <person name="Hoskins R.A."/>
            <person name="Galle R.F."/>
            <person name="George R.A."/>
            <person name="Lewis S.E."/>
            <person name="Richards S."/>
            <person name="Ashburner M."/>
            <person name="Henderson S.N."/>
            <person name="Sutton G.G."/>
            <person name="Wortman J.R."/>
            <person name="Yandell M.D."/>
            <person name="Zhang Q."/>
            <person name="Chen L.X."/>
            <person name="Brandon R.C."/>
            <person name="Rogers Y.-H.C."/>
            <person name="Blazej R.G."/>
            <person name="Champe M."/>
            <person name="Pfeiffer B.D."/>
            <person name="Wan K.H."/>
            <person name="Doyle C."/>
            <person name="Baxter E.G."/>
            <person name="Helt G."/>
            <person name="Nelson C.R."/>
            <person name="Miklos G.L.G."/>
            <person name="Abril J.F."/>
            <person name="Agbayani A."/>
            <person name="An H.-J."/>
            <person name="Andrews-Pfannkoch C."/>
            <person name="Baldwin D."/>
            <person name="Ballew R.M."/>
            <person name="Basu A."/>
            <person name="Baxendale J."/>
            <person name="Bayraktaroglu L."/>
            <person name="Beasley E.M."/>
            <person name="Beeson K.Y."/>
            <person name="Benos P.V."/>
            <person name="Berman B.P."/>
            <person name="Bhandari D."/>
            <person name="Bolshakov S."/>
            <person name="Borkova D."/>
            <person name="Botchan M.R."/>
            <person name="Bouck J."/>
            <person name="Brokstein P."/>
            <person name="Brottier P."/>
            <person name="Burtis K.C."/>
            <person name="Busam D.A."/>
            <person name="Butler H."/>
            <person name="Cadieu E."/>
            <person name="Center A."/>
            <person name="Chandra I."/>
            <person name="Cherry J.M."/>
            <person name="Cawley S."/>
            <person name="Dahlke C."/>
            <person name="Davenport L.B."/>
            <person name="Davies P."/>
            <person name="de Pablos B."/>
            <person name="Delcher A."/>
            <person name="Deng Z."/>
            <person name="Mays A.D."/>
            <person name="Dew I."/>
            <person name="Dietz S.M."/>
            <person name="Dodson K."/>
            <person name="Doup L.E."/>
            <person name="Downes M."/>
            <person name="Dugan-Rocha S."/>
            <person name="Dunkov B.C."/>
            <person name="Dunn P."/>
            <person name="Durbin K.J."/>
            <person name="Evangelista C.C."/>
            <person name="Ferraz C."/>
            <person name="Ferriera S."/>
            <person name="Fleischmann W."/>
            <person name="Fosler C."/>
            <person name="Gabrielian A.E."/>
            <person name="Garg N.S."/>
            <person name="Gelbart W.M."/>
            <person name="Glasser K."/>
            <person name="Glodek A."/>
            <person name="Gong F."/>
            <person name="Gorrell J.H."/>
            <person name="Gu Z."/>
            <person name="Guan P."/>
            <person name="Harris M."/>
            <person name="Harris N.L."/>
            <person name="Harvey D.A."/>
            <person name="Heiman T.J."/>
            <person name="Hernandez J.R."/>
            <person name="Houck J."/>
            <person name="Hostin D."/>
            <person name="Houston K.A."/>
            <person name="Howland T.J."/>
            <person name="Wei M.-H."/>
            <person name="Ibegwam C."/>
            <person name="Jalali M."/>
            <person name="Kalush F."/>
            <person name="Karpen G.H."/>
            <person name="Ke Z."/>
            <person name="Kennison J.A."/>
            <person name="Ketchum K.A."/>
            <person name="Kimmel B.E."/>
            <person name="Kodira C.D."/>
            <person name="Kraft C.L."/>
            <person name="Kravitz S."/>
            <person name="Kulp D."/>
            <person name="Lai Z."/>
            <person name="Lasko P."/>
            <person name="Lei Y."/>
            <person name="Levitsky A.A."/>
            <person name="Li J.H."/>
            <person name="Li Z."/>
            <person name="Liang Y."/>
            <person name="Lin X."/>
            <person name="Liu X."/>
            <person name="Mattei B."/>
            <person name="McIntosh T.C."/>
            <person name="McLeod M.P."/>
            <person name="McPherson D."/>
            <person name="Merkulov G."/>
            <person name="Milshina N.V."/>
            <person name="Mobarry C."/>
            <person name="Morris J."/>
            <person name="Moshrefi A."/>
            <person name="Mount S.M."/>
            <person name="Moy M."/>
            <person name="Murphy B."/>
            <person name="Murphy L."/>
            <person name="Muzny D.M."/>
            <person name="Nelson D.L."/>
            <person name="Nelson D.R."/>
            <person name="Nelson K.A."/>
            <person name="Nixon K."/>
            <person name="Nusskern D.R."/>
            <person name="Pacleb J.M."/>
            <person name="Palazzolo M."/>
            <person name="Pittman G.S."/>
            <person name="Pan S."/>
            <person name="Pollard J."/>
            <person name="Puri V."/>
            <person name="Reese M.G."/>
            <person name="Reinert K."/>
            <person name="Remington K."/>
            <person name="Saunders R.D.C."/>
            <person name="Scheeler F."/>
            <person name="Shen H."/>
            <person name="Shue B.C."/>
            <person name="Siden-Kiamos I."/>
            <person name="Simpson M."/>
            <person name="Skupski M.P."/>
            <person name="Smith T.J."/>
            <person name="Spier E."/>
            <person name="Spradling A.C."/>
            <person name="Stapleton M."/>
            <person name="Strong R."/>
            <person name="Sun E."/>
            <person name="Svirskas R."/>
            <person name="Tector C."/>
            <person name="Turner R."/>
            <person name="Venter E."/>
            <person name="Wang A.H."/>
            <person name="Wang X."/>
            <person name="Wang Z.-Y."/>
            <person name="Wassarman D.A."/>
            <person name="Weinstock G.M."/>
            <person name="Weissenbach J."/>
            <person name="Williams S.M."/>
            <person name="Woodage T."/>
            <person name="Worley K.C."/>
            <person name="Wu D."/>
            <person name="Yang S."/>
            <person name="Yao Q.A."/>
            <person name="Ye J."/>
            <person name="Yeh R.-F."/>
            <person name="Zaveri J.S."/>
            <person name="Zhan M."/>
            <person name="Zhang G."/>
            <person name="Zhao Q."/>
            <person name="Zheng L."/>
            <person name="Zheng X.H."/>
            <person name="Zhong F.N."/>
            <person name="Zhong W."/>
            <person name="Zhou X."/>
            <person name="Zhu S.C."/>
            <person name="Zhu X."/>
            <person name="Smith H.O."/>
            <person name="Gibbs R.A."/>
            <person name="Myers E.W."/>
            <person name="Rubin G.M."/>
            <person name="Venter J.C."/>
        </authorList>
    </citation>
    <scope>NUCLEOTIDE SEQUENCE [LARGE SCALE GENOMIC DNA]</scope>
    <source>
        <strain>Berkeley</strain>
    </source>
</reference>
<reference key="3">
    <citation type="journal article" date="2002" name="Genome Biol.">
        <title>Annotation of the Drosophila melanogaster euchromatic genome: a systematic review.</title>
        <authorList>
            <person name="Misra S."/>
            <person name="Crosby M.A."/>
            <person name="Mungall C.J."/>
            <person name="Matthews B.B."/>
            <person name="Campbell K.S."/>
            <person name="Hradecky P."/>
            <person name="Huang Y."/>
            <person name="Kaminker J.S."/>
            <person name="Millburn G.H."/>
            <person name="Prochnik S.E."/>
            <person name="Smith C.D."/>
            <person name="Tupy J.L."/>
            <person name="Whitfield E.J."/>
            <person name="Bayraktaroglu L."/>
            <person name="Berman B.P."/>
            <person name="Bettencourt B.R."/>
            <person name="Celniker S.E."/>
            <person name="de Grey A.D.N.J."/>
            <person name="Drysdale R.A."/>
            <person name="Harris N.L."/>
            <person name="Richter J."/>
            <person name="Russo S."/>
            <person name="Schroeder A.J."/>
            <person name="Shu S.Q."/>
            <person name="Stapleton M."/>
            <person name="Yamada C."/>
            <person name="Ashburner M."/>
            <person name="Gelbart W.M."/>
            <person name="Rubin G.M."/>
            <person name="Lewis S.E."/>
        </authorList>
    </citation>
    <scope>GENOME REANNOTATION</scope>
    <scope>ALTERNATIVE SPLICING</scope>
    <source>
        <strain>Berkeley</strain>
    </source>
</reference>
<reference key="4">
    <citation type="journal article" date="2002" name="Genome Biol.">
        <title>A Drosophila full-length cDNA resource.</title>
        <authorList>
            <person name="Stapleton M."/>
            <person name="Carlson J.W."/>
            <person name="Brokstein P."/>
            <person name="Yu C."/>
            <person name="Champe M."/>
            <person name="George R.A."/>
            <person name="Guarin H."/>
            <person name="Kronmiller B."/>
            <person name="Pacleb J.M."/>
            <person name="Park S."/>
            <person name="Wan K.H."/>
            <person name="Rubin G.M."/>
            <person name="Celniker S.E."/>
        </authorList>
    </citation>
    <scope>NUCLEOTIDE SEQUENCE [LARGE SCALE MRNA] (ISOFORM 2)</scope>
    <source>
        <strain>Berkeley</strain>
        <tissue>Embryo</tissue>
    </source>
</reference>